<keyword id="KW-0025">Alternative splicing</keyword>
<keyword id="KW-1015">Disulfide bond</keyword>
<keyword id="KW-0325">Glycoprotein</keyword>
<keyword id="KW-0333">Golgi apparatus</keyword>
<keyword id="KW-0472">Membrane</keyword>
<keyword id="KW-1185">Reference proteome</keyword>
<keyword id="KW-0735">Signal-anchor</keyword>
<keyword id="KW-0808">Transferase</keyword>
<keyword id="KW-0812">Transmembrane</keyword>
<keyword id="KW-1133">Transmembrane helix</keyword>
<proteinExistence type="evidence at transcript level"/>
<gene>
    <name evidence="7" type="primary">Tpst</name>
    <name evidence="7" type="synonym">Tango13</name>
    <name evidence="7" type="ORF">CG32632</name>
</gene>
<name>TPST_DROME</name>
<evidence type="ECO:0000250" key="1">
    <source>
        <dbReference type="UniProtKB" id="O60704"/>
    </source>
</evidence>
<evidence type="ECO:0000255" key="2"/>
<evidence type="ECO:0000256" key="3">
    <source>
        <dbReference type="SAM" id="MobiDB-lite"/>
    </source>
</evidence>
<evidence type="ECO:0000269" key="4">
    <source>
    </source>
</evidence>
<evidence type="ECO:0000303" key="5">
    <source ref="5"/>
</evidence>
<evidence type="ECO:0000305" key="6"/>
<evidence type="ECO:0000312" key="7">
    <source>
        <dbReference type="FlyBase" id="FBgn0086674"/>
    </source>
</evidence>
<sequence>MRLPYRNKKVTLWVLFGIIVITMFLFKFTELRPTCLFKVDAANELSSQMVRVEKYLTDDNQRVYSYNREMPLIFIGGVPRSGTTLMRAMLDAHPDVRCGQETRVIPRILQLRSHWLKSEKESLRLQEAGITKEVMNSAIAQFCLEIIAKHGEPAPRLCNKDPLTLKMGSYVIELFPNAKFLFMVRDGRATVHSIISRKVTITGFDLSSYRQCMQKWNHAIEVMHEQCRDIGKDRCMMVYYEQLVLHPEEWMRKILKFLDVPWNDAVLHHEEFINKPNGVPLSKVERSSDQVIKPVNLEAMSKWVGQIPGDVVRDMADIAPMLSVLGYDPYANPPDYGKPDAWVQDNTSKLKANRMLWESKAKQVLQMSSSEDDNTNTIINNSNNKDNNNNQYTINKIIPEQHSRQRQHVQQQHLQQQQQQHLQQQQHQRQQQQQQREEESESEREAEPDREQQLLHQKPKDVITIKQLPLAGSNNNNINNNINNNNNNNNIMEDPMADT</sequence>
<reference key="1">
    <citation type="submission" date="2002-06" db="EMBL/GenBank/DDBJ databases">
        <title>Tyrosylprotein sulfotransferase from Drosophila melanogaster.</title>
        <authorList>
            <person name="Moore K.L."/>
            <person name="Sato-Tomomori C."/>
        </authorList>
    </citation>
    <scope>NUCLEOTIDE SEQUENCE [MRNA] (ISOFORM A)</scope>
    <source>
        <strain>Berkeley</strain>
        <tissue>Larva</tissue>
        <tissue>Pupae</tissue>
    </source>
</reference>
<reference key="2">
    <citation type="journal article" date="2000" name="Science">
        <title>The genome sequence of Drosophila melanogaster.</title>
        <authorList>
            <person name="Adams M.D."/>
            <person name="Celniker S.E."/>
            <person name="Holt R.A."/>
            <person name="Evans C.A."/>
            <person name="Gocayne J.D."/>
            <person name="Amanatides P.G."/>
            <person name="Scherer S.E."/>
            <person name="Li P.W."/>
            <person name="Hoskins R.A."/>
            <person name="Galle R.F."/>
            <person name="George R.A."/>
            <person name="Lewis S.E."/>
            <person name="Richards S."/>
            <person name="Ashburner M."/>
            <person name="Henderson S.N."/>
            <person name="Sutton G.G."/>
            <person name="Wortman J.R."/>
            <person name="Yandell M.D."/>
            <person name="Zhang Q."/>
            <person name="Chen L.X."/>
            <person name="Brandon R.C."/>
            <person name="Rogers Y.-H.C."/>
            <person name="Blazej R.G."/>
            <person name="Champe M."/>
            <person name="Pfeiffer B.D."/>
            <person name="Wan K.H."/>
            <person name="Doyle C."/>
            <person name="Baxter E.G."/>
            <person name="Helt G."/>
            <person name="Nelson C.R."/>
            <person name="Miklos G.L.G."/>
            <person name="Abril J.F."/>
            <person name="Agbayani A."/>
            <person name="An H.-J."/>
            <person name="Andrews-Pfannkoch C."/>
            <person name="Baldwin D."/>
            <person name="Ballew R.M."/>
            <person name="Basu A."/>
            <person name="Baxendale J."/>
            <person name="Bayraktaroglu L."/>
            <person name="Beasley E.M."/>
            <person name="Beeson K.Y."/>
            <person name="Benos P.V."/>
            <person name="Berman B.P."/>
            <person name="Bhandari D."/>
            <person name="Bolshakov S."/>
            <person name="Borkova D."/>
            <person name="Botchan M.R."/>
            <person name="Bouck J."/>
            <person name="Brokstein P."/>
            <person name="Brottier P."/>
            <person name="Burtis K.C."/>
            <person name="Busam D.A."/>
            <person name="Butler H."/>
            <person name="Cadieu E."/>
            <person name="Center A."/>
            <person name="Chandra I."/>
            <person name="Cherry J.M."/>
            <person name="Cawley S."/>
            <person name="Dahlke C."/>
            <person name="Davenport L.B."/>
            <person name="Davies P."/>
            <person name="de Pablos B."/>
            <person name="Delcher A."/>
            <person name="Deng Z."/>
            <person name="Mays A.D."/>
            <person name="Dew I."/>
            <person name="Dietz S.M."/>
            <person name="Dodson K."/>
            <person name="Doup L.E."/>
            <person name="Downes M."/>
            <person name="Dugan-Rocha S."/>
            <person name="Dunkov B.C."/>
            <person name="Dunn P."/>
            <person name="Durbin K.J."/>
            <person name="Evangelista C.C."/>
            <person name="Ferraz C."/>
            <person name="Ferriera S."/>
            <person name="Fleischmann W."/>
            <person name="Fosler C."/>
            <person name="Gabrielian A.E."/>
            <person name="Garg N.S."/>
            <person name="Gelbart W.M."/>
            <person name="Glasser K."/>
            <person name="Glodek A."/>
            <person name="Gong F."/>
            <person name="Gorrell J.H."/>
            <person name="Gu Z."/>
            <person name="Guan P."/>
            <person name="Harris M."/>
            <person name="Harris N.L."/>
            <person name="Harvey D.A."/>
            <person name="Heiman T.J."/>
            <person name="Hernandez J.R."/>
            <person name="Houck J."/>
            <person name="Hostin D."/>
            <person name="Houston K.A."/>
            <person name="Howland T.J."/>
            <person name="Wei M.-H."/>
            <person name="Ibegwam C."/>
            <person name="Jalali M."/>
            <person name="Kalush F."/>
            <person name="Karpen G.H."/>
            <person name="Ke Z."/>
            <person name="Kennison J.A."/>
            <person name="Ketchum K.A."/>
            <person name="Kimmel B.E."/>
            <person name="Kodira C.D."/>
            <person name="Kraft C.L."/>
            <person name="Kravitz S."/>
            <person name="Kulp D."/>
            <person name="Lai Z."/>
            <person name="Lasko P."/>
            <person name="Lei Y."/>
            <person name="Levitsky A.A."/>
            <person name="Li J.H."/>
            <person name="Li Z."/>
            <person name="Liang Y."/>
            <person name="Lin X."/>
            <person name="Liu X."/>
            <person name="Mattei B."/>
            <person name="McIntosh T.C."/>
            <person name="McLeod M.P."/>
            <person name="McPherson D."/>
            <person name="Merkulov G."/>
            <person name="Milshina N.V."/>
            <person name="Mobarry C."/>
            <person name="Morris J."/>
            <person name="Moshrefi A."/>
            <person name="Mount S.M."/>
            <person name="Moy M."/>
            <person name="Murphy B."/>
            <person name="Murphy L."/>
            <person name="Muzny D.M."/>
            <person name="Nelson D.L."/>
            <person name="Nelson D.R."/>
            <person name="Nelson K.A."/>
            <person name="Nixon K."/>
            <person name="Nusskern D.R."/>
            <person name="Pacleb J.M."/>
            <person name="Palazzolo M."/>
            <person name="Pittman G.S."/>
            <person name="Pan S."/>
            <person name="Pollard J."/>
            <person name="Puri V."/>
            <person name="Reese M.G."/>
            <person name="Reinert K."/>
            <person name="Remington K."/>
            <person name="Saunders R.D.C."/>
            <person name="Scheeler F."/>
            <person name="Shen H."/>
            <person name="Shue B.C."/>
            <person name="Siden-Kiamos I."/>
            <person name="Simpson M."/>
            <person name="Skupski M.P."/>
            <person name="Smith T.J."/>
            <person name="Spier E."/>
            <person name="Spradling A.C."/>
            <person name="Stapleton M."/>
            <person name="Strong R."/>
            <person name="Sun E."/>
            <person name="Svirskas R."/>
            <person name="Tector C."/>
            <person name="Turner R."/>
            <person name="Venter E."/>
            <person name="Wang A.H."/>
            <person name="Wang X."/>
            <person name="Wang Z.-Y."/>
            <person name="Wassarman D.A."/>
            <person name="Weinstock G.M."/>
            <person name="Weissenbach J."/>
            <person name="Williams S.M."/>
            <person name="Woodage T."/>
            <person name="Worley K.C."/>
            <person name="Wu D."/>
            <person name="Yang S."/>
            <person name="Yao Q.A."/>
            <person name="Ye J."/>
            <person name="Yeh R.-F."/>
            <person name="Zaveri J.S."/>
            <person name="Zhan M."/>
            <person name="Zhang G."/>
            <person name="Zhao Q."/>
            <person name="Zheng L."/>
            <person name="Zheng X.H."/>
            <person name="Zhong F.N."/>
            <person name="Zhong W."/>
            <person name="Zhou X."/>
            <person name="Zhu S.C."/>
            <person name="Zhu X."/>
            <person name="Smith H.O."/>
            <person name="Gibbs R.A."/>
            <person name="Myers E.W."/>
            <person name="Rubin G.M."/>
            <person name="Venter J.C."/>
        </authorList>
    </citation>
    <scope>NUCLEOTIDE SEQUENCE [LARGE SCALE GENOMIC DNA]</scope>
    <source>
        <strain>Berkeley</strain>
    </source>
</reference>
<reference key="3">
    <citation type="journal article" date="2002" name="Genome Biol.">
        <title>Annotation of the Drosophila melanogaster euchromatic genome: a systematic review.</title>
        <authorList>
            <person name="Misra S."/>
            <person name="Crosby M.A."/>
            <person name="Mungall C.J."/>
            <person name="Matthews B.B."/>
            <person name="Campbell K.S."/>
            <person name="Hradecky P."/>
            <person name="Huang Y."/>
            <person name="Kaminker J.S."/>
            <person name="Millburn G.H."/>
            <person name="Prochnik S.E."/>
            <person name="Smith C.D."/>
            <person name="Tupy J.L."/>
            <person name="Whitfield E.J."/>
            <person name="Bayraktaroglu L."/>
            <person name="Berman B.P."/>
            <person name="Bettencourt B.R."/>
            <person name="Celniker S.E."/>
            <person name="de Grey A.D.N.J."/>
            <person name="Drysdale R.A."/>
            <person name="Harris N.L."/>
            <person name="Richter J."/>
            <person name="Russo S."/>
            <person name="Schroeder A.J."/>
            <person name="Shu S.Q."/>
            <person name="Stapleton M."/>
            <person name="Yamada C."/>
            <person name="Ashburner M."/>
            <person name="Gelbart W.M."/>
            <person name="Rubin G.M."/>
            <person name="Lewis S.E."/>
        </authorList>
    </citation>
    <scope>GENOME REANNOTATION</scope>
    <source>
        <strain>Berkeley</strain>
    </source>
</reference>
<reference key="4">
    <citation type="journal article" date="2002" name="Genome Biol.">
        <title>A Drosophila full-length cDNA resource.</title>
        <authorList>
            <person name="Stapleton M."/>
            <person name="Carlson J.W."/>
            <person name="Brokstein P."/>
            <person name="Yu C."/>
            <person name="Champe M."/>
            <person name="George R.A."/>
            <person name="Guarin H."/>
            <person name="Kronmiller B."/>
            <person name="Pacleb J.M."/>
            <person name="Park S."/>
            <person name="Wan K.H."/>
            <person name="Rubin G.M."/>
            <person name="Celniker S.E."/>
        </authorList>
    </citation>
    <scope>NUCLEOTIDE SEQUENCE [LARGE SCALE MRNA] (ISOFORM A)</scope>
    <source>
        <strain>Berkeley</strain>
        <tissue>Larva</tissue>
        <tissue>Pupae</tissue>
    </source>
</reference>
<reference key="5">
    <citation type="submission" date="2005-03" db="EMBL/GenBank/DDBJ databases">
        <authorList>
            <person name="Stapleton M."/>
            <person name="Carlson J.W."/>
            <person name="Chavez C."/>
            <person name="Frise E."/>
            <person name="George R.A."/>
            <person name="Pacleb J.M."/>
            <person name="Park S."/>
            <person name="Wan K.H."/>
            <person name="Yu C."/>
            <person name="Rubin G.M."/>
            <person name="Celniker S.E."/>
        </authorList>
    </citation>
    <scope>NUCLEOTIDE SEQUENCE [LARGE SCALE MRNA] (ISOFORM B)</scope>
    <source>
        <strain>Berkeley</strain>
        <tissue>Ovary</tissue>
    </source>
</reference>
<reference key="6">
    <citation type="journal article" date="2006" name="Nature">
        <title>Functional genomics reveals genes involved in protein secretion and Golgi organization.</title>
        <authorList>
            <person name="Bard F."/>
            <person name="Casano L."/>
            <person name="Mallabiabarrena A."/>
            <person name="Wallace E."/>
            <person name="Saito K."/>
            <person name="Kitayama H."/>
            <person name="Guizzunti G."/>
            <person name="Hu Y."/>
            <person name="Wendler F."/>
            <person name="Dasgupta R."/>
            <person name="Perrimon N."/>
            <person name="Malhotra V."/>
        </authorList>
    </citation>
    <scope>FUNCTION</scope>
    <scope>SUBCELLULAR LOCATION</scope>
</reference>
<feature type="chain" id="PRO_0000189833" description="Protein-tyrosine sulfotransferase">
    <location>
        <begin position="1"/>
        <end position="499"/>
    </location>
</feature>
<feature type="topological domain" description="Cytoplasmic" evidence="2">
    <location>
        <begin position="1"/>
        <end position="9"/>
    </location>
</feature>
<feature type="transmembrane region" description="Helical; Signal-anchor for type II membrane protein" evidence="2">
    <location>
        <begin position="10"/>
        <end position="30"/>
    </location>
</feature>
<feature type="topological domain" description="Lumenal" evidence="2">
    <location>
        <begin position="31"/>
        <end position="499"/>
    </location>
</feature>
<feature type="region of interest" description="Interaction with peptide substrate" evidence="1">
    <location>
        <begin position="103"/>
        <end position="107"/>
    </location>
</feature>
<feature type="region of interest" description="Disordered" evidence="3">
    <location>
        <begin position="362"/>
        <end position="460"/>
    </location>
</feature>
<feature type="region of interest" description="Disordered" evidence="3">
    <location>
        <begin position="476"/>
        <end position="499"/>
    </location>
</feature>
<feature type="compositionally biased region" description="Low complexity" evidence="3">
    <location>
        <begin position="375"/>
        <end position="400"/>
    </location>
</feature>
<feature type="compositionally biased region" description="Low complexity" evidence="3">
    <location>
        <begin position="408"/>
        <end position="434"/>
    </location>
</feature>
<feature type="compositionally biased region" description="Basic and acidic residues" evidence="3">
    <location>
        <begin position="443"/>
        <end position="460"/>
    </location>
</feature>
<feature type="compositionally biased region" description="Low complexity" evidence="3">
    <location>
        <begin position="476"/>
        <end position="491"/>
    </location>
</feature>
<feature type="active site" description="Proton donor/acceptor" evidence="1">
    <location>
        <position position="101"/>
    </location>
</feature>
<feature type="binding site" evidence="1">
    <location>
        <begin position="80"/>
        <end position="84"/>
    </location>
    <ligand>
        <name>3'-phosphoadenylyl sulfate</name>
        <dbReference type="ChEBI" id="CHEBI:58339"/>
    </ligand>
</feature>
<feature type="binding site" evidence="1">
    <location>
        <position position="185"/>
    </location>
    <ligand>
        <name>3'-phosphoadenylyl sulfate</name>
        <dbReference type="ChEBI" id="CHEBI:58339"/>
    </ligand>
</feature>
<feature type="binding site" evidence="1">
    <location>
        <position position="193"/>
    </location>
    <ligand>
        <name>3'-phosphoadenylyl sulfate</name>
        <dbReference type="ChEBI" id="CHEBI:58339"/>
    </ligand>
</feature>
<feature type="binding site" evidence="1">
    <location>
        <position position="197"/>
    </location>
    <ligand>
        <name>3'-phosphoadenylyl sulfate</name>
        <dbReference type="ChEBI" id="CHEBI:58339"/>
    </ligand>
</feature>
<feature type="binding site" evidence="1">
    <location>
        <position position="240"/>
    </location>
    <ligand>
        <name>3'-phosphoadenylyl sulfate</name>
        <dbReference type="ChEBI" id="CHEBI:58339"/>
    </ligand>
</feature>
<feature type="binding site" evidence="1">
    <location>
        <begin position="287"/>
        <end position="296"/>
    </location>
    <ligand>
        <name>3'-phosphoadenylyl sulfate</name>
        <dbReference type="ChEBI" id="CHEBI:58339"/>
    </ligand>
</feature>
<feature type="binding site" evidence="1">
    <location>
        <position position="302"/>
    </location>
    <ligand>
        <name>3'-phosphoadenylyl sulfate</name>
        <dbReference type="ChEBI" id="CHEBI:58339"/>
    </ligand>
</feature>
<feature type="site" description="Transition state stabilizer" evidence="1">
    <location>
        <position position="160"/>
    </location>
</feature>
<feature type="site" description="Transition state stabilizer" evidence="1">
    <location>
        <position position="287"/>
    </location>
</feature>
<feature type="glycosylation site" description="N-linked (GlcNAc...) asparagine" evidence="2">
    <location>
        <position position="346"/>
    </location>
</feature>
<feature type="glycosylation site" description="N-linked (GlcNAc...) asparagine" evidence="2">
    <location>
        <position position="380"/>
    </location>
</feature>
<feature type="disulfide bond" evidence="1">
    <location>
        <begin position="98"/>
        <end position="158"/>
    </location>
</feature>
<feature type="disulfide bond" evidence="1">
    <location>
        <begin position="227"/>
        <end position="235"/>
    </location>
</feature>
<feature type="splice variant" id="VSP_018999" description="In isoform B." evidence="5">
    <original>GKPDAWVQDN</original>
    <variation>VKGQSNAVGE</variation>
    <location>
        <begin position="337"/>
        <end position="346"/>
    </location>
</feature>
<feature type="splice variant" id="VSP_019000" description="In isoform B." evidence="5">
    <location>
        <begin position="347"/>
        <end position="499"/>
    </location>
</feature>
<comment type="function">
    <text evidence="1 4">Catalyzes the O-sulfation of tyrosine residues within acidic motifs of polypeptides (By similarity). Has a role in protein secretion.</text>
</comment>
<comment type="catalytic activity">
    <reaction>
        <text>L-tyrosyl-[protein] + 3'-phosphoadenylyl sulfate = O-sulfo-L-tyrosine-[protein] + adenosine 3',5'-bisphosphate + H(+)</text>
        <dbReference type="Rhea" id="RHEA:16801"/>
        <dbReference type="Rhea" id="RHEA-COMP:10136"/>
        <dbReference type="Rhea" id="RHEA-COMP:11688"/>
        <dbReference type="ChEBI" id="CHEBI:15378"/>
        <dbReference type="ChEBI" id="CHEBI:46858"/>
        <dbReference type="ChEBI" id="CHEBI:58339"/>
        <dbReference type="ChEBI" id="CHEBI:58343"/>
        <dbReference type="ChEBI" id="CHEBI:65286"/>
        <dbReference type="EC" id="2.8.2.20"/>
    </reaction>
</comment>
<comment type="subcellular location">
    <subcellularLocation>
        <location evidence="4">Golgi apparatus membrane</location>
        <topology evidence="4">Single-pass type II membrane protein</topology>
    </subcellularLocation>
</comment>
<comment type="alternative products">
    <event type="alternative splicing"/>
    <isoform>
        <id>Q9VYB7-1</id>
        <name>A</name>
        <sequence type="displayed"/>
    </isoform>
    <isoform>
        <id>Q9VYB7-2</id>
        <name>B</name>
        <sequence type="described" ref="VSP_018999 VSP_019000"/>
    </isoform>
</comment>
<comment type="similarity">
    <text evidence="6">Belongs to the protein sulfotransferase family.</text>
</comment>
<protein>
    <recommendedName>
        <fullName>Protein-tyrosine sulfotransferase</fullName>
        <ecNumber evidence="1">2.8.2.20</ecNumber>
    </recommendedName>
    <alternativeName>
        <fullName>Transport and Golgi organization protein 13</fullName>
        <shortName>Tango-13</shortName>
    </alternativeName>
    <alternativeName>
        <fullName evidence="7">Tyrosylprotein sulfotransferase</fullName>
    </alternativeName>
</protein>
<dbReference type="EC" id="2.8.2.20" evidence="1"/>
<dbReference type="EMBL" id="AY124548">
    <property type="protein sequence ID" value="AAM94031.1"/>
    <property type="molecule type" value="mRNA"/>
</dbReference>
<dbReference type="EMBL" id="AE014298">
    <property type="protein sequence ID" value="AAF48286.2"/>
    <property type="molecule type" value="Genomic_DNA"/>
</dbReference>
<dbReference type="EMBL" id="AY119073">
    <property type="protein sequence ID" value="AAM50933.1"/>
    <property type="molecule type" value="mRNA"/>
</dbReference>
<dbReference type="EMBL" id="BT021950">
    <property type="protein sequence ID" value="AAX51655.1"/>
    <property type="molecule type" value="mRNA"/>
</dbReference>
<dbReference type="RefSeq" id="NP_001096973.1">
    <molecule id="Q9VYB7-2"/>
    <property type="nucleotide sequence ID" value="NM_001103503.2"/>
</dbReference>
<dbReference type="RefSeq" id="NP_001259519.1">
    <molecule id="Q9VYB7-2"/>
    <property type="nucleotide sequence ID" value="NM_001272590.1"/>
</dbReference>
<dbReference type="RefSeq" id="NP_001259520.1">
    <molecule id="Q9VYB7-1"/>
    <property type="nucleotide sequence ID" value="NM_001272591.1"/>
</dbReference>
<dbReference type="RefSeq" id="NP_001259521.1">
    <molecule id="Q9VYB7-2"/>
    <property type="nucleotide sequence ID" value="NM_001272592.1"/>
</dbReference>
<dbReference type="RefSeq" id="NP_727717.1">
    <molecule id="Q9VYB7-1"/>
    <property type="nucleotide sequence ID" value="NM_167374.3"/>
</dbReference>
<dbReference type="SMR" id="Q9VYB7"/>
<dbReference type="BioGRID" id="58690">
    <property type="interactions" value="8"/>
</dbReference>
<dbReference type="FunCoup" id="Q9VYB7">
    <property type="interactions" value="249"/>
</dbReference>
<dbReference type="IntAct" id="Q9VYB7">
    <property type="interactions" value="7"/>
</dbReference>
<dbReference type="STRING" id="7227.FBpp0303425"/>
<dbReference type="GlyCosmos" id="Q9VYB7">
    <property type="glycosylation" value="2 sites, No reported glycans"/>
</dbReference>
<dbReference type="GlyGen" id="Q9VYB7">
    <property type="glycosylation" value="2 sites"/>
</dbReference>
<dbReference type="PaxDb" id="7227-FBpp0302581"/>
<dbReference type="DNASU" id="32312"/>
<dbReference type="EnsemblMetazoa" id="FBtr0073803">
    <molecule id="Q9VYB7-1"/>
    <property type="protein sequence ID" value="FBpp0290842"/>
    <property type="gene ID" value="FBgn0086674"/>
</dbReference>
<dbReference type="EnsemblMetazoa" id="FBtr0113443">
    <molecule id="Q9VYB7-2"/>
    <property type="protein sequence ID" value="FBpp0112355"/>
    <property type="gene ID" value="FBgn0086674"/>
</dbReference>
<dbReference type="EnsemblMetazoa" id="FBtr0310432">
    <molecule id="Q9VYB7-2"/>
    <property type="protein sequence ID" value="FBpp0302580"/>
    <property type="gene ID" value="FBgn0086674"/>
</dbReference>
<dbReference type="EnsemblMetazoa" id="FBtr0310433">
    <molecule id="Q9VYB7-1"/>
    <property type="protein sequence ID" value="FBpp0302581"/>
    <property type="gene ID" value="FBgn0086674"/>
</dbReference>
<dbReference type="EnsemblMetazoa" id="FBtr0333723">
    <molecule id="Q9VYB7-2"/>
    <property type="protein sequence ID" value="FBpp0305872"/>
    <property type="gene ID" value="FBgn0086674"/>
</dbReference>
<dbReference type="GeneID" id="32312"/>
<dbReference type="KEGG" id="dme:Dmel_CG32632"/>
<dbReference type="AGR" id="FB:FBgn0086674"/>
<dbReference type="CTD" id="32312"/>
<dbReference type="FlyBase" id="FBgn0086674">
    <property type="gene designation" value="Tpst"/>
</dbReference>
<dbReference type="VEuPathDB" id="VectorBase:FBgn0086674"/>
<dbReference type="eggNOG" id="KOG3988">
    <property type="taxonomic scope" value="Eukaryota"/>
</dbReference>
<dbReference type="GeneTree" id="ENSGT00390000006030"/>
<dbReference type="InParanoid" id="Q9VYB7"/>
<dbReference type="OMA" id="SQWKKSE"/>
<dbReference type="OrthoDB" id="545675at2759"/>
<dbReference type="PhylomeDB" id="Q9VYB7"/>
<dbReference type="BRENDA" id="2.8.2.20">
    <property type="organism ID" value="1994"/>
</dbReference>
<dbReference type="BioGRID-ORCS" id="32312">
    <property type="hits" value="0 hits in 3 CRISPR screens"/>
</dbReference>
<dbReference type="ChiTaRS" id="Tpst">
    <property type="organism name" value="fly"/>
</dbReference>
<dbReference type="GenomeRNAi" id="32312"/>
<dbReference type="PRO" id="PR:Q9VYB7"/>
<dbReference type="Proteomes" id="UP000000803">
    <property type="component" value="Chromosome X"/>
</dbReference>
<dbReference type="Bgee" id="FBgn0086674">
    <property type="expression patterns" value="Expressed in enterocyte of anterior adult midgut epithelium in digestive tract and 238 other cell types or tissues"/>
</dbReference>
<dbReference type="ExpressionAtlas" id="Q9VYB7">
    <property type="expression patterns" value="baseline and differential"/>
</dbReference>
<dbReference type="GO" id="GO:0005794">
    <property type="term" value="C:Golgi apparatus"/>
    <property type="evidence" value="ECO:0000314"/>
    <property type="project" value="FlyBase"/>
</dbReference>
<dbReference type="GO" id="GO:0000139">
    <property type="term" value="C:Golgi membrane"/>
    <property type="evidence" value="ECO:0007669"/>
    <property type="project" value="UniProtKB-SubCell"/>
</dbReference>
<dbReference type="GO" id="GO:0008476">
    <property type="term" value="F:protein-tyrosine sulfotransferase activity"/>
    <property type="evidence" value="ECO:0000314"/>
    <property type="project" value="FlyBase"/>
</dbReference>
<dbReference type="GO" id="GO:0009306">
    <property type="term" value="P:protein secretion"/>
    <property type="evidence" value="ECO:0000315"/>
    <property type="project" value="FlyBase"/>
</dbReference>
<dbReference type="FunFam" id="3.40.50.300:FF:000290">
    <property type="entry name" value="Protein-tyrosine sulfotransferase"/>
    <property type="match status" value="1"/>
</dbReference>
<dbReference type="Gene3D" id="3.40.50.300">
    <property type="entry name" value="P-loop containing nucleotide triphosphate hydrolases"/>
    <property type="match status" value="1"/>
</dbReference>
<dbReference type="InterPro" id="IPR027417">
    <property type="entry name" value="P-loop_NTPase"/>
</dbReference>
<dbReference type="InterPro" id="IPR026634">
    <property type="entry name" value="TPST-like"/>
</dbReference>
<dbReference type="PANTHER" id="PTHR12788:SF10">
    <property type="entry name" value="PROTEIN-TYROSINE SULFOTRANSFERASE"/>
    <property type="match status" value="1"/>
</dbReference>
<dbReference type="PANTHER" id="PTHR12788">
    <property type="entry name" value="PROTEIN-TYROSINE SULFOTRANSFERASE 2"/>
    <property type="match status" value="1"/>
</dbReference>
<dbReference type="Pfam" id="PF13469">
    <property type="entry name" value="Sulfotransfer_3"/>
    <property type="match status" value="1"/>
</dbReference>
<dbReference type="SUPFAM" id="SSF52540">
    <property type="entry name" value="P-loop containing nucleoside triphosphate hydrolases"/>
    <property type="match status" value="1"/>
</dbReference>
<organism>
    <name type="scientific">Drosophila melanogaster</name>
    <name type="common">Fruit fly</name>
    <dbReference type="NCBI Taxonomy" id="7227"/>
    <lineage>
        <taxon>Eukaryota</taxon>
        <taxon>Metazoa</taxon>
        <taxon>Ecdysozoa</taxon>
        <taxon>Arthropoda</taxon>
        <taxon>Hexapoda</taxon>
        <taxon>Insecta</taxon>
        <taxon>Pterygota</taxon>
        <taxon>Neoptera</taxon>
        <taxon>Endopterygota</taxon>
        <taxon>Diptera</taxon>
        <taxon>Brachycera</taxon>
        <taxon>Muscomorpha</taxon>
        <taxon>Ephydroidea</taxon>
        <taxon>Drosophilidae</taxon>
        <taxon>Drosophila</taxon>
        <taxon>Sophophora</taxon>
    </lineage>
</organism>
<accession>Q9VYB7</accession>
<accession>Q58CJ7</accession>
<accession>Q8MM59</accession>